<organism>
    <name type="scientific">Anopheles quadrimaculatus</name>
    <name type="common">Common malaria mosquito</name>
    <dbReference type="NCBI Taxonomy" id="7166"/>
    <lineage>
        <taxon>Eukaryota</taxon>
        <taxon>Metazoa</taxon>
        <taxon>Ecdysozoa</taxon>
        <taxon>Arthropoda</taxon>
        <taxon>Hexapoda</taxon>
        <taxon>Insecta</taxon>
        <taxon>Pterygota</taxon>
        <taxon>Neoptera</taxon>
        <taxon>Endopterygota</taxon>
        <taxon>Diptera</taxon>
        <taxon>Nematocera</taxon>
        <taxon>Culicoidea</taxon>
        <taxon>Culicidae</taxon>
        <taxon>Anophelinae</taxon>
        <taxon>Anopheles</taxon>
    </lineage>
</organism>
<sequence>MANMFLMFYLSMIMFLFGCMVFVSNRKHLLSTLLSLEYMVLSLFIFLFFYLNFMNYEMYFSMFFLTFCVCEGVLGLSILVSMIRTHGNDYFQSFSILQC</sequence>
<proteinExistence type="inferred from homology"/>
<accession>P33512</accession>
<name>NU4LM_ANOQU</name>
<comment type="function">
    <text evidence="1">Core subunit of the mitochondrial membrane respiratory chain NADH dehydrogenase (Complex I) that is believed to belong to the minimal assembly required for catalysis. Complex I functions in the transfer of electrons from NADH to the respiratory chain. The immediate electron acceptor for the enzyme is believed to be ubiquinone (By similarity).</text>
</comment>
<comment type="catalytic activity">
    <reaction>
        <text>a ubiquinone + NADH + 5 H(+)(in) = a ubiquinol + NAD(+) + 4 H(+)(out)</text>
        <dbReference type="Rhea" id="RHEA:29091"/>
        <dbReference type="Rhea" id="RHEA-COMP:9565"/>
        <dbReference type="Rhea" id="RHEA-COMP:9566"/>
        <dbReference type="ChEBI" id="CHEBI:15378"/>
        <dbReference type="ChEBI" id="CHEBI:16389"/>
        <dbReference type="ChEBI" id="CHEBI:17976"/>
        <dbReference type="ChEBI" id="CHEBI:57540"/>
        <dbReference type="ChEBI" id="CHEBI:57945"/>
        <dbReference type="EC" id="7.1.1.2"/>
    </reaction>
</comment>
<comment type="subcellular location">
    <subcellularLocation>
        <location evidence="1">Mitochondrion membrane</location>
        <topology evidence="1">Multi-pass membrane protein</topology>
    </subcellularLocation>
</comment>
<comment type="similarity">
    <text evidence="3">Belongs to the complex I subunit 4L family.</text>
</comment>
<protein>
    <recommendedName>
        <fullName>NADH-ubiquinone oxidoreductase chain 4L</fullName>
        <ecNumber>7.1.1.2</ecNumber>
    </recommendedName>
    <alternativeName>
        <fullName>NADH dehydrogenase subunit 4L</fullName>
    </alternativeName>
</protein>
<feature type="chain" id="PRO_0000118384" description="NADH-ubiquinone oxidoreductase chain 4L">
    <location>
        <begin position="1"/>
        <end position="99"/>
    </location>
</feature>
<feature type="transmembrane region" description="Helical" evidence="2">
    <location>
        <begin position="4"/>
        <end position="24"/>
    </location>
</feature>
<feature type="transmembrane region" description="Helical" evidence="2">
    <location>
        <begin position="29"/>
        <end position="49"/>
    </location>
</feature>
<feature type="transmembrane region" description="Helical" evidence="2">
    <location>
        <begin position="63"/>
        <end position="83"/>
    </location>
</feature>
<keyword id="KW-0249">Electron transport</keyword>
<keyword id="KW-0472">Membrane</keyword>
<keyword id="KW-0496">Mitochondrion</keyword>
<keyword id="KW-0520">NAD</keyword>
<keyword id="KW-0679">Respiratory chain</keyword>
<keyword id="KW-1278">Translocase</keyword>
<keyword id="KW-0812">Transmembrane</keyword>
<keyword id="KW-1133">Transmembrane helix</keyword>
<keyword id="KW-0813">Transport</keyword>
<keyword id="KW-0830">Ubiquinone</keyword>
<dbReference type="EC" id="7.1.1.2"/>
<dbReference type="EMBL" id="L04272">
    <property type="protein sequence ID" value="AAA93549.1"/>
    <property type="molecule type" value="Genomic_DNA"/>
</dbReference>
<dbReference type="SMR" id="P33512"/>
<dbReference type="GO" id="GO:0031966">
    <property type="term" value="C:mitochondrial membrane"/>
    <property type="evidence" value="ECO:0007669"/>
    <property type="project" value="UniProtKB-SubCell"/>
</dbReference>
<dbReference type="GO" id="GO:0030964">
    <property type="term" value="C:NADH dehydrogenase complex"/>
    <property type="evidence" value="ECO:0007669"/>
    <property type="project" value="TreeGrafter"/>
</dbReference>
<dbReference type="GO" id="GO:0008137">
    <property type="term" value="F:NADH dehydrogenase (ubiquinone) activity"/>
    <property type="evidence" value="ECO:0007669"/>
    <property type="project" value="UniProtKB-EC"/>
</dbReference>
<dbReference type="GO" id="GO:0042773">
    <property type="term" value="P:ATP synthesis coupled electron transport"/>
    <property type="evidence" value="ECO:0007669"/>
    <property type="project" value="InterPro"/>
</dbReference>
<dbReference type="FunFam" id="1.10.287.3510:FF:000003">
    <property type="entry name" value="NADH-ubiquinone oxidoreductase chain 4L"/>
    <property type="match status" value="1"/>
</dbReference>
<dbReference type="Gene3D" id="1.10.287.3510">
    <property type="match status" value="1"/>
</dbReference>
<dbReference type="InterPro" id="IPR001133">
    <property type="entry name" value="NADH_UbQ_OxRdtase_chain4L/K"/>
</dbReference>
<dbReference type="InterPro" id="IPR039428">
    <property type="entry name" value="NUOK/Mnh_C1-like"/>
</dbReference>
<dbReference type="PANTHER" id="PTHR11434:SF0">
    <property type="entry name" value="NADH-UBIQUINONE OXIDOREDUCTASE CHAIN 4L"/>
    <property type="match status" value="1"/>
</dbReference>
<dbReference type="PANTHER" id="PTHR11434">
    <property type="entry name" value="NADH-UBIQUINONE OXIDOREDUCTASE SUBUNIT ND4L"/>
    <property type="match status" value="1"/>
</dbReference>
<dbReference type="Pfam" id="PF00420">
    <property type="entry name" value="Oxidored_q2"/>
    <property type="match status" value="1"/>
</dbReference>
<gene>
    <name type="primary">ND4L</name>
</gene>
<evidence type="ECO:0000250" key="1"/>
<evidence type="ECO:0000255" key="2"/>
<evidence type="ECO:0000305" key="3"/>
<geneLocation type="mitochondrion"/>
<reference key="1">
    <citation type="journal article" date="1990" name="Arch. Insect Biochem. Physiol.">
        <title>Cloning of the mitochondrial genome of Anopheles quadrimaculatus.</title>
        <authorList>
            <person name="Cockburn A.F."/>
            <person name="Mitchell S.E."/>
            <person name="Seawright J.A."/>
        </authorList>
    </citation>
    <scope>NUCLEOTIDE SEQUENCE [GENOMIC DNA]</scope>
    <source>
        <strain>Orlando</strain>
    </source>
</reference>